<keyword id="KW-1185">Reference proteome</keyword>
<keyword id="KW-0687">Ribonucleoprotein</keyword>
<keyword id="KW-0689">Ribosomal protein</keyword>
<keyword id="KW-0694">RNA-binding</keyword>
<keyword id="KW-0699">rRNA-binding</keyword>
<organism>
    <name type="scientific">Desulforamulus reducens (strain ATCC BAA-1160 / DSM 100696 / MI-1)</name>
    <name type="common">Desulfotomaculum reducens</name>
    <dbReference type="NCBI Taxonomy" id="349161"/>
    <lineage>
        <taxon>Bacteria</taxon>
        <taxon>Bacillati</taxon>
        <taxon>Bacillota</taxon>
        <taxon>Clostridia</taxon>
        <taxon>Eubacteriales</taxon>
        <taxon>Peptococcaceae</taxon>
        <taxon>Desulforamulus</taxon>
    </lineage>
</organism>
<evidence type="ECO:0000255" key="1">
    <source>
        <dbReference type="HAMAP-Rule" id="MF_00503"/>
    </source>
</evidence>
<evidence type="ECO:0000305" key="2"/>
<sequence>MQVVLLQDVVKLGKKGDIVNVSEGYARNFLYPKNLAAPATESKLKELKTQKQTQAAKKQKEEAEAKALAAKINGLTVALKVKVGDAGRLFGAISNKDIADGLKSQHGYSIDKKKIVLKEPIKNLGTYKITLKIHPVAQADINVEVASMD</sequence>
<proteinExistence type="inferred from homology"/>
<accession>A4J9Q0</accession>
<gene>
    <name evidence="1" type="primary">rplI</name>
    <name type="ordered locus">Dred_3303</name>
</gene>
<protein>
    <recommendedName>
        <fullName evidence="1">Large ribosomal subunit protein bL9</fullName>
    </recommendedName>
    <alternativeName>
        <fullName evidence="2">50S ribosomal protein L9</fullName>
    </alternativeName>
</protein>
<feature type="chain" id="PRO_1000072446" description="Large ribosomal subunit protein bL9">
    <location>
        <begin position="1"/>
        <end position="149"/>
    </location>
</feature>
<name>RL9_DESRM</name>
<comment type="function">
    <text evidence="1">Binds to the 23S rRNA.</text>
</comment>
<comment type="similarity">
    <text evidence="1">Belongs to the bacterial ribosomal protein bL9 family.</text>
</comment>
<reference key="1">
    <citation type="submission" date="2007-03" db="EMBL/GenBank/DDBJ databases">
        <title>Complete sequence of Desulfotomaculum reducens MI-1.</title>
        <authorList>
            <consortium name="US DOE Joint Genome Institute"/>
            <person name="Copeland A."/>
            <person name="Lucas S."/>
            <person name="Lapidus A."/>
            <person name="Barry K."/>
            <person name="Detter J.C."/>
            <person name="Glavina del Rio T."/>
            <person name="Hammon N."/>
            <person name="Israni S."/>
            <person name="Dalin E."/>
            <person name="Tice H."/>
            <person name="Pitluck S."/>
            <person name="Sims D."/>
            <person name="Brettin T."/>
            <person name="Bruce D."/>
            <person name="Han C."/>
            <person name="Tapia R."/>
            <person name="Schmutz J."/>
            <person name="Larimer F."/>
            <person name="Land M."/>
            <person name="Hauser L."/>
            <person name="Kyrpides N."/>
            <person name="Kim E."/>
            <person name="Tebo B.M."/>
            <person name="Richardson P."/>
        </authorList>
    </citation>
    <scope>NUCLEOTIDE SEQUENCE [LARGE SCALE GENOMIC DNA]</scope>
    <source>
        <strain>ATCC BAA-1160 / DSM 100696 / MI-1</strain>
    </source>
</reference>
<dbReference type="EMBL" id="CP000612">
    <property type="protein sequence ID" value="ABO51803.1"/>
    <property type="molecule type" value="Genomic_DNA"/>
</dbReference>
<dbReference type="RefSeq" id="WP_011879588.1">
    <property type="nucleotide sequence ID" value="NC_009253.1"/>
</dbReference>
<dbReference type="SMR" id="A4J9Q0"/>
<dbReference type="STRING" id="349161.Dred_3303"/>
<dbReference type="KEGG" id="drm:Dred_3303"/>
<dbReference type="eggNOG" id="COG0359">
    <property type="taxonomic scope" value="Bacteria"/>
</dbReference>
<dbReference type="HOGENOM" id="CLU_078938_3_0_9"/>
<dbReference type="OrthoDB" id="9788336at2"/>
<dbReference type="Proteomes" id="UP000001556">
    <property type="component" value="Chromosome"/>
</dbReference>
<dbReference type="GO" id="GO:1990904">
    <property type="term" value="C:ribonucleoprotein complex"/>
    <property type="evidence" value="ECO:0007669"/>
    <property type="project" value="UniProtKB-KW"/>
</dbReference>
<dbReference type="GO" id="GO:0005840">
    <property type="term" value="C:ribosome"/>
    <property type="evidence" value="ECO:0007669"/>
    <property type="project" value="UniProtKB-KW"/>
</dbReference>
<dbReference type="GO" id="GO:0019843">
    <property type="term" value="F:rRNA binding"/>
    <property type="evidence" value="ECO:0007669"/>
    <property type="project" value="UniProtKB-UniRule"/>
</dbReference>
<dbReference type="GO" id="GO:0003735">
    <property type="term" value="F:structural constituent of ribosome"/>
    <property type="evidence" value="ECO:0007669"/>
    <property type="project" value="InterPro"/>
</dbReference>
<dbReference type="GO" id="GO:0006412">
    <property type="term" value="P:translation"/>
    <property type="evidence" value="ECO:0007669"/>
    <property type="project" value="UniProtKB-UniRule"/>
</dbReference>
<dbReference type="Gene3D" id="3.10.430.100">
    <property type="entry name" value="Ribosomal protein L9, C-terminal domain"/>
    <property type="match status" value="1"/>
</dbReference>
<dbReference type="Gene3D" id="3.40.5.10">
    <property type="entry name" value="Ribosomal protein L9, N-terminal domain"/>
    <property type="match status" value="1"/>
</dbReference>
<dbReference type="HAMAP" id="MF_00503">
    <property type="entry name" value="Ribosomal_bL9"/>
    <property type="match status" value="1"/>
</dbReference>
<dbReference type="InterPro" id="IPR000244">
    <property type="entry name" value="Ribosomal_bL9"/>
</dbReference>
<dbReference type="InterPro" id="IPR009027">
    <property type="entry name" value="Ribosomal_bL9/RNase_H1_N"/>
</dbReference>
<dbReference type="InterPro" id="IPR020594">
    <property type="entry name" value="Ribosomal_bL9_bac/chp"/>
</dbReference>
<dbReference type="InterPro" id="IPR020069">
    <property type="entry name" value="Ribosomal_bL9_C"/>
</dbReference>
<dbReference type="InterPro" id="IPR036791">
    <property type="entry name" value="Ribosomal_bL9_C_sf"/>
</dbReference>
<dbReference type="InterPro" id="IPR020070">
    <property type="entry name" value="Ribosomal_bL9_N"/>
</dbReference>
<dbReference type="InterPro" id="IPR036935">
    <property type="entry name" value="Ribosomal_bL9_N_sf"/>
</dbReference>
<dbReference type="NCBIfam" id="TIGR00158">
    <property type="entry name" value="L9"/>
    <property type="match status" value="1"/>
</dbReference>
<dbReference type="PANTHER" id="PTHR21368">
    <property type="entry name" value="50S RIBOSOMAL PROTEIN L9"/>
    <property type="match status" value="1"/>
</dbReference>
<dbReference type="Pfam" id="PF03948">
    <property type="entry name" value="Ribosomal_L9_C"/>
    <property type="match status" value="1"/>
</dbReference>
<dbReference type="Pfam" id="PF01281">
    <property type="entry name" value="Ribosomal_L9_N"/>
    <property type="match status" value="1"/>
</dbReference>
<dbReference type="SUPFAM" id="SSF55658">
    <property type="entry name" value="L9 N-domain-like"/>
    <property type="match status" value="1"/>
</dbReference>
<dbReference type="SUPFAM" id="SSF55653">
    <property type="entry name" value="Ribosomal protein L9 C-domain"/>
    <property type="match status" value="1"/>
</dbReference>
<dbReference type="PROSITE" id="PS00651">
    <property type="entry name" value="RIBOSOMAL_L9"/>
    <property type="match status" value="1"/>
</dbReference>